<sequence length="512" mass="53579">MPASRLVRQVSAPRNLFGRLVAQGGFYTAGLQLGSGAVVLPVICAHQGLTWAAGLLYPAFCIGAILGNSLSPLILQRAGQLRHLLMAAISATAAALVVCNAAVPWTGVGVAAVFLATTGAGGVVTGVSSVAYTDMISSMLPAVRRGELLLTQGAAGSVLATGVTLVIVPMLAHGNEMARYHDLLWLGAAGLVCSGIAALFVGPMRSVSVTTATRMPLREIYWMGFAIARSQPWFRRYMTTYLLFVPISLGTTFFSLRAAQSNGSLHVLVILSSIGLVVGSMLWRQINRLFGVRGLLLGSALLNAAAALLCMVAESCGQWVHAWAYGTAFLLATVAAQTVVAASISWISVLAPERYRATLICVGSTLAAVEATVLGVALGGIAQKHATIWPVVVVLTLAVIAAVASLRAPTRIGVTADTSPQAATLQAYRPATPNPIHSDERSTPPDHLSVRRGQLRHVWDSRRPAPPLNRPSCRRAARRPAPGKPAAALPQPRHPAVGVREGAPLDAGQRIA</sequence>
<accession>P9WLI2</accession>
<accession>L0TBT9</accession>
<accession>P64953</accession>
<accession>Q10398</accession>
<protein>
    <recommendedName>
        <fullName>Uncharacterized protein MT2265</fullName>
    </recommendedName>
</protein>
<proteinExistence type="predicted"/>
<comment type="subcellular location">
    <subcellularLocation>
        <location evidence="3">Cell membrane</location>
        <topology evidence="3">Multi-pass membrane protein</topology>
    </subcellularLocation>
</comment>
<dbReference type="EMBL" id="AE000516">
    <property type="protein sequence ID" value="AAK46551.1"/>
    <property type="molecule type" value="Genomic_DNA"/>
</dbReference>
<dbReference type="PIR" id="B70786">
    <property type="entry name" value="B70786"/>
</dbReference>
<dbReference type="RefSeq" id="WP_003899218.1">
    <property type="nucleotide sequence ID" value="NZ_KK341227.1"/>
</dbReference>
<dbReference type="SMR" id="P9WLI2"/>
<dbReference type="KEGG" id="mtc:MT2265"/>
<dbReference type="HOGENOM" id="CLU_046265_1_0_11"/>
<dbReference type="Proteomes" id="UP000001020">
    <property type="component" value="Chromosome"/>
</dbReference>
<dbReference type="GO" id="GO:0005886">
    <property type="term" value="C:plasma membrane"/>
    <property type="evidence" value="ECO:0007669"/>
    <property type="project" value="UniProtKB-SubCell"/>
</dbReference>
<dbReference type="Gene3D" id="1.20.1250.20">
    <property type="entry name" value="MFS general substrate transporter like domains"/>
    <property type="match status" value="1"/>
</dbReference>
<dbReference type="InterPro" id="IPR036259">
    <property type="entry name" value="MFS_trans_sf"/>
</dbReference>
<dbReference type="SUPFAM" id="SSF103473">
    <property type="entry name" value="MFS general substrate transporter"/>
    <property type="match status" value="1"/>
</dbReference>
<feature type="chain" id="PRO_0000427474" description="Uncharacterized protein MT2265">
    <location>
        <begin position="1"/>
        <end position="512"/>
    </location>
</feature>
<feature type="transmembrane region" description="Helical" evidence="1">
    <location>
        <begin position="25"/>
        <end position="45"/>
    </location>
</feature>
<feature type="transmembrane region" description="Helical" evidence="1">
    <location>
        <begin position="55"/>
        <end position="75"/>
    </location>
</feature>
<feature type="transmembrane region" description="Helical" evidence="1">
    <location>
        <begin position="96"/>
        <end position="116"/>
    </location>
</feature>
<feature type="transmembrane region" description="Helical" evidence="1">
    <location>
        <begin position="123"/>
        <end position="143"/>
    </location>
</feature>
<feature type="transmembrane region" description="Helical" evidence="1">
    <location>
        <begin position="148"/>
        <end position="168"/>
    </location>
</feature>
<feature type="transmembrane region" description="Helical" evidence="1">
    <location>
        <begin position="183"/>
        <end position="203"/>
    </location>
</feature>
<feature type="transmembrane region" description="Helical" evidence="1">
    <location>
        <begin position="238"/>
        <end position="258"/>
    </location>
</feature>
<feature type="transmembrane region" description="Helical" evidence="1">
    <location>
        <begin position="263"/>
        <end position="283"/>
    </location>
</feature>
<feature type="transmembrane region" description="Helical" evidence="1">
    <location>
        <begin position="294"/>
        <end position="314"/>
    </location>
</feature>
<feature type="transmembrane region" description="Helical" evidence="1">
    <location>
        <begin position="329"/>
        <end position="349"/>
    </location>
</feature>
<feature type="transmembrane region" description="Helical" evidence="1">
    <location>
        <begin position="359"/>
        <end position="379"/>
    </location>
</feature>
<feature type="transmembrane region" description="Helical" evidence="1">
    <location>
        <begin position="386"/>
        <end position="406"/>
    </location>
</feature>
<feature type="region of interest" description="Disordered" evidence="2">
    <location>
        <begin position="428"/>
        <end position="512"/>
    </location>
</feature>
<reference key="1">
    <citation type="journal article" date="2002" name="J. Bacteriol.">
        <title>Whole-genome comparison of Mycobacterium tuberculosis clinical and laboratory strains.</title>
        <authorList>
            <person name="Fleischmann R.D."/>
            <person name="Alland D."/>
            <person name="Eisen J.A."/>
            <person name="Carpenter L."/>
            <person name="White O."/>
            <person name="Peterson J.D."/>
            <person name="DeBoy R.T."/>
            <person name="Dodson R.J."/>
            <person name="Gwinn M.L."/>
            <person name="Haft D.H."/>
            <person name="Hickey E.K."/>
            <person name="Kolonay J.F."/>
            <person name="Nelson W.C."/>
            <person name="Umayam L.A."/>
            <person name="Ermolaeva M.D."/>
            <person name="Salzberg S.L."/>
            <person name="Delcher A."/>
            <person name="Utterback T.R."/>
            <person name="Weidman J.F."/>
            <person name="Khouri H.M."/>
            <person name="Gill J."/>
            <person name="Mikula A."/>
            <person name="Bishai W."/>
            <person name="Jacobs W.R. Jr."/>
            <person name="Venter J.C."/>
            <person name="Fraser C.M."/>
        </authorList>
    </citation>
    <scope>NUCLEOTIDE SEQUENCE [LARGE SCALE GENOMIC DNA]</scope>
    <source>
        <strain>CDC 1551 / Oshkosh</strain>
    </source>
</reference>
<name>Y2209_MYCTO</name>
<gene>
    <name type="ordered locus">MT2265</name>
</gene>
<evidence type="ECO:0000255" key="1"/>
<evidence type="ECO:0000256" key="2">
    <source>
        <dbReference type="SAM" id="MobiDB-lite"/>
    </source>
</evidence>
<evidence type="ECO:0000305" key="3"/>
<organism>
    <name type="scientific">Mycobacterium tuberculosis (strain CDC 1551 / Oshkosh)</name>
    <dbReference type="NCBI Taxonomy" id="83331"/>
    <lineage>
        <taxon>Bacteria</taxon>
        <taxon>Bacillati</taxon>
        <taxon>Actinomycetota</taxon>
        <taxon>Actinomycetes</taxon>
        <taxon>Mycobacteriales</taxon>
        <taxon>Mycobacteriaceae</taxon>
        <taxon>Mycobacterium</taxon>
        <taxon>Mycobacterium tuberculosis complex</taxon>
    </lineage>
</organism>
<keyword id="KW-1003">Cell membrane</keyword>
<keyword id="KW-0472">Membrane</keyword>
<keyword id="KW-1185">Reference proteome</keyword>
<keyword id="KW-0812">Transmembrane</keyword>
<keyword id="KW-1133">Transmembrane helix</keyword>